<comment type="function">
    <text evidence="2">Component of the cytochrome c oxidase, the last enzyme in the mitochondrial electron transport chain which drives oxidative phosphorylation. The respiratory chain contains 3 multisubunit complexes succinate dehydrogenase (complex II, CII), ubiquinol-cytochrome c oxidoreductase (cytochrome b-c1 complex, complex III, CIII) and cytochrome c oxidase (complex IV, CIV), that cooperate to transfer electrons derived from NADH and succinate to molecular oxygen, creating an electrochemical gradient over the inner membrane that drives transmembrane transport and the ATP synthase. Cytochrome c oxidase is the component of the respiratory chain that catalyzes the reduction of oxygen to water. Electrons originating from reduced cytochrome c in the intermembrane space (IMS) are transferred via the dinuclear copper A center (CU(A)) of subunit 2 and heme A of subunit 1 to the active site in subunit 1, a binuclear center (BNC) formed by heme A3 and copper B (CU(B)). The BNC reduces molecular oxygen to 2 water molecules using 4 electrons from cytochrome c in the IMS and 4 protons from the mitochondrial matrix.</text>
</comment>
<comment type="catalytic activity">
    <reaction evidence="2">
        <text>4 Fe(II)-[cytochrome c] + O2 + 8 H(+)(in) = 4 Fe(III)-[cytochrome c] + 2 H2O + 4 H(+)(out)</text>
        <dbReference type="Rhea" id="RHEA:11436"/>
        <dbReference type="Rhea" id="RHEA-COMP:10350"/>
        <dbReference type="Rhea" id="RHEA-COMP:14399"/>
        <dbReference type="ChEBI" id="CHEBI:15377"/>
        <dbReference type="ChEBI" id="CHEBI:15378"/>
        <dbReference type="ChEBI" id="CHEBI:15379"/>
        <dbReference type="ChEBI" id="CHEBI:29033"/>
        <dbReference type="ChEBI" id="CHEBI:29034"/>
        <dbReference type="EC" id="7.1.1.9"/>
    </reaction>
    <physiologicalReaction direction="left-to-right" evidence="2">
        <dbReference type="Rhea" id="RHEA:11437"/>
    </physiologicalReaction>
</comment>
<comment type="cofactor">
    <cofactor evidence="2">
        <name>heme</name>
        <dbReference type="ChEBI" id="CHEBI:30413"/>
    </cofactor>
    <text evidence="2">Binds 2 heme A groups non-covalently per subunit.</text>
</comment>
<comment type="cofactor">
    <cofactor evidence="2">
        <name>Cu cation</name>
        <dbReference type="ChEBI" id="CHEBI:23378"/>
    </cofactor>
    <text evidence="2">Binds a copper B center.</text>
</comment>
<comment type="pathway">
    <text evidence="2">Energy metabolism; oxidative phosphorylation.</text>
</comment>
<comment type="subunit">
    <text evidence="2">Component of the cytochrome c oxidase (complex IV, CIV), a multisubunit enzyme composed of a catalytic core of 3 subunits and several supernumerary subunits. The complex exists as a monomer or a dimer and forms supercomplexes (SCs) in the inner mitochondrial membrane with ubiquinol-cytochrome c oxidoreductase (cytochrome b-c1 complex, complex III, CIII).</text>
</comment>
<comment type="subcellular location">
    <subcellularLocation>
        <location evidence="2">Mitochondrion inner membrane</location>
        <topology evidence="2">Multi-pass membrane protein</topology>
    </subcellularLocation>
</comment>
<comment type="similarity">
    <text evidence="6">Belongs to the heme-copper respiratory oxidase family.</text>
</comment>
<comment type="caution">
    <text evidence="6">There is no mitochondrial-type translation initiation codon present in frame in the sequence. In PubMed:19533212, the authors suggest the presence of a novel start codon coding for either Pro or Ser in Drosophila CoI transcripts.</text>
</comment>
<name>COX1_DROMA</name>
<accession>Q34345</accession>
<accession>Q34346</accession>
<accession>Q34350</accession>
<accession>Q7IV58</accession>
<accession>Q7IV62</accession>
<evidence type="ECO:0000250" key="1">
    <source>
        <dbReference type="UniProtKB" id="P00396"/>
    </source>
</evidence>
<evidence type="ECO:0000250" key="2">
    <source>
        <dbReference type="UniProtKB" id="P00401"/>
    </source>
</evidence>
<evidence type="ECO:0000255" key="3"/>
<evidence type="ECO:0000269" key="4">
    <source>
    </source>
</evidence>
<evidence type="ECO:0000269" key="5">
    <source>
    </source>
</evidence>
<evidence type="ECO:0000305" key="6"/>
<proteinExistence type="inferred from homology"/>
<protein>
    <recommendedName>
        <fullName>Cytochrome c oxidase subunit 1</fullName>
        <ecNumber>7.1.1.9</ecNumber>
    </recommendedName>
    <alternativeName>
        <fullName>Cytochrome c oxidase polypeptide I</fullName>
    </alternativeName>
</protein>
<sequence length="511" mass="56384">PRQWLFSTNHKDIGTLYFIFGAWAGMVGTSLSILIRAELGHPGALIGDDQIYNVIVTAHAFIMIFFMVMPIMIGGFGNWLVPLMLGAPDMAFPRMNNMSFWLLPPALSLLLVSSMVENGAGTGWTVYPPLSAGIAHGGASVDLAIFSLHLAGISSILGAVNFITTVINMRSTGISLDRMPLFVWSVVITALLLLLSLPVLAGAITMLLTDRNLNTSFFDPAGGGDPILYQHLFWFFGHPEVYILILPGFGMISHIISQESGKKETFGSLGMIYAMLAIGLLGFIVWAHHMFTVGMDVDTRAYFTSATMIIAVPTGIKIFSWLATLHGTQLSYSPAILWALGFVFLFTVGGLTGVVLANSSVDIILHDTYYVVAHFHYVLSMGAVFAIMAGFIHWYPLFTGLTLNNKWLKSHFIIMFIGVNLTFFPQHFLGLAGMPRRYSDYPDAYTTWNVVSTIGSTISLLGILFFFYIIWESLVSQRQVIYPIQLNSSIEWYQNTPPAEHSYSELPLLTN</sequence>
<gene>
    <name type="primary">mt:CoI</name>
    <name type="synonym">CoI</name>
</gene>
<geneLocation type="mitochondrion"/>
<keyword id="KW-0106">Calcium</keyword>
<keyword id="KW-0186">Copper</keyword>
<keyword id="KW-0249">Electron transport</keyword>
<keyword id="KW-0349">Heme</keyword>
<keyword id="KW-0408">Iron</keyword>
<keyword id="KW-0460">Magnesium</keyword>
<keyword id="KW-0472">Membrane</keyword>
<keyword id="KW-0479">Metal-binding</keyword>
<keyword id="KW-0496">Mitochondrion</keyword>
<keyword id="KW-0999">Mitochondrion inner membrane</keyword>
<keyword id="KW-0679">Respiratory chain</keyword>
<keyword id="KW-1278">Translocase</keyword>
<keyword id="KW-0812">Transmembrane</keyword>
<keyword id="KW-1133">Transmembrane helix</keyword>
<keyword id="KW-0813">Transport</keyword>
<organism>
    <name type="scientific">Drosophila mauritiana</name>
    <name type="common">Fruit fly</name>
    <dbReference type="NCBI Taxonomy" id="7226"/>
    <lineage>
        <taxon>Eukaryota</taxon>
        <taxon>Metazoa</taxon>
        <taxon>Ecdysozoa</taxon>
        <taxon>Arthropoda</taxon>
        <taxon>Hexapoda</taxon>
        <taxon>Insecta</taxon>
        <taxon>Pterygota</taxon>
        <taxon>Neoptera</taxon>
        <taxon>Endopterygota</taxon>
        <taxon>Diptera</taxon>
        <taxon>Brachycera</taxon>
        <taxon>Muscomorpha</taxon>
        <taxon>Ephydroidea</taxon>
        <taxon>Drosophilidae</taxon>
        <taxon>Drosophila</taxon>
        <taxon>Sophophora</taxon>
    </lineage>
</organism>
<dbReference type="EC" id="7.1.1.9"/>
<dbReference type="EMBL" id="M18073">
    <property type="protein sequence ID" value="AAA69804.2"/>
    <property type="molecule type" value="Genomic_DNA"/>
</dbReference>
<dbReference type="EMBL" id="M57907">
    <property type="protein sequence ID" value="AAB02280.1"/>
    <property type="molecule type" value="Genomic_DNA"/>
</dbReference>
<dbReference type="EMBL" id="AF200830">
    <property type="protein sequence ID" value="AAF77258.1"/>
    <property type="molecule type" value="Genomic_DNA"/>
</dbReference>
<dbReference type="EMBL" id="AF200831">
    <property type="protein sequence ID" value="AAF77277.1"/>
    <property type="molecule type" value="Genomic_DNA"/>
</dbReference>
<dbReference type="EMBL" id="M57912">
    <property type="protein sequence ID" value="AAA99051.1"/>
    <property type="molecule type" value="Genomic_DNA"/>
</dbReference>
<dbReference type="SMR" id="Q34345"/>
<dbReference type="CTD" id="4512"/>
<dbReference type="OrthoDB" id="27386at7215"/>
<dbReference type="UniPathway" id="UPA00705"/>
<dbReference type="Proteomes" id="UP000515162">
    <property type="component" value="Mitochondrion MT"/>
</dbReference>
<dbReference type="GO" id="GO:0005743">
    <property type="term" value="C:mitochondrial inner membrane"/>
    <property type="evidence" value="ECO:0007669"/>
    <property type="project" value="UniProtKB-SubCell"/>
</dbReference>
<dbReference type="GO" id="GO:0045277">
    <property type="term" value="C:respiratory chain complex IV"/>
    <property type="evidence" value="ECO:0007669"/>
    <property type="project" value="InterPro"/>
</dbReference>
<dbReference type="GO" id="GO:0004129">
    <property type="term" value="F:cytochrome-c oxidase activity"/>
    <property type="evidence" value="ECO:0007669"/>
    <property type="project" value="UniProtKB-EC"/>
</dbReference>
<dbReference type="GO" id="GO:0020037">
    <property type="term" value="F:heme binding"/>
    <property type="evidence" value="ECO:0007669"/>
    <property type="project" value="InterPro"/>
</dbReference>
<dbReference type="GO" id="GO:0046872">
    <property type="term" value="F:metal ion binding"/>
    <property type="evidence" value="ECO:0007669"/>
    <property type="project" value="UniProtKB-KW"/>
</dbReference>
<dbReference type="GO" id="GO:0015990">
    <property type="term" value="P:electron transport coupled proton transport"/>
    <property type="evidence" value="ECO:0007669"/>
    <property type="project" value="TreeGrafter"/>
</dbReference>
<dbReference type="GO" id="GO:0006123">
    <property type="term" value="P:mitochondrial electron transport, cytochrome c to oxygen"/>
    <property type="evidence" value="ECO:0007669"/>
    <property type="project" value="TreeGrafter"/>
</dbReference>
<dbReference type="CDD" id="cd01663">
    <property type="entry name" value="Cyt_c_Oxidase_I"/>
    <property type="match status" value="1"/>
</dbReference>
<dbReference type="FunFam" id="1.20.210.10:FF:000001">
    <property type="entry name" value="Cytochrome c oxidase subunit 1"/>
    <property type="match status" value="1"/>
</dbReference>
<dbReference type="Gene3D" id="1.20.210.10">
    <property type="entry name" value="Cytochrome c oxidase-like, subunit I domain"/>
    <property type="match status" value="1"/>
</dbReference>
<dbReference type="InterPro" id="IPR023616">
    <property type="entry name" value="Cyt_c_oxase-like_su1_dom"/>
</dbReference>
<dbReference type="InterPro" id="IPR036927">
    <property type="entry name" value="Cyt_c_oxase-like_su1_sf"/>
</dbReference>
<dbReference type="InterPro" id="IPR000883">
    <property type="entry name" value="Cyt_C_Oxase_1"/>
</dbReference>
<dbReference type="InterPro" id="IPR023615">
    <property type="entry name" value="Cyt_c_Oxase_su1_BS"/>
</dbReference>
<dbReference type="InterPro" id="IPR033944">
    <property type="entry name" value="Cyt_c_oxase_su1_dom"/>
</dbReference>
<dbReference type="PANTHER" id="PTHR10422">
    <property type="entry name" value="CYTOCHROME C OXIDASE SUBUNIT 1"/>
    <property type="match status" value="1"/>
</dbReference>
<dbReference type="PANTHER" id="PTHR10422:SF18">
    <property type="entry name" value="CYTOCHROME C OXIDASE SUBUNIT 1"/>
    <property type="match status" value="1"/>
</dbReference>
<dbReference type="Pfam" id="PF00115">
    <property type="entry name" value="COX1"/>
    <property type="match status" value="1"/>
</dbReference>
<dbReference type="PRINTS" id="PR01165">
    <property type="entry name" value="CYCOXIDASEI"/>
</dbReference>
<dbReference type="SUPFAM" id="SSF81442">
    <property type="entry name" value="Cytochrome c oxidase subunit I-like"/>
    <property type="match status" value="1"/>
</dbReference>
<dbReference type="PROSITE" id="PS50855">
    <property type="entry name" value="COX1"/>
    <property type="match status" value="1"/>
</dbReference>
<dbReference type="PROSITE" id="PS00077">
    <property type="entry name" value="COX1_CUB"/>
    <property type="match status" value="1"/>
</dbReference>
<feature type="chain" id="PRO_0000183324" description="Cytochrome c oxidase subunit 1">
    <location>
        <begin position="1"/>
        <end position="511"/>
    </location>
</feature>
<feature type="transmembrane region" description="Helical" evidence="3">
    <location>
        <begin position="15"/>
        <end position="35"/>
    </location>
</feature>
<feature type="transmembrane region" description="Helical" evidence="3">
    <location>
        <begin position="54"/>
        <end position="74"/>
    </location>
</feature>
<feature type="transmembrane region" description="Helical" evidence="3">
    <location>
        <begin position="100"/>
        <end position="120"/>
    </location>
</feature>
<feature type="transmembrane region" description="Helical" evidence="3">
    <location>
        <begin position="143"/>
        <end position="163"/>
    </location>
</feature>
<feature type="transmembrane region" description="Helical" evidence="3">
    <location>
        <begin position="181"/>
        <end position="201"/>
    </location>
</feature>
<feature type="transmembrane region" description="Helical" evidence="3">
    <location>
        <begin position="232"/>
        <end position="252"/>
    </location>
</feature>
<feature type="transmembrane region" description="Helical" evidence="3">
    <location>
        <begin position="266"/>
        <end position="286"/>
    </location>
</feature>
<feature type="transmembrane region" description="Helical" evidence="3">
    <location>
        <begin position="303"/>
        <end position="323"/>
    </location>
</feature>
<feature type="transmembrane region" description="Helical" evidence="3">
    <location>
        <begin position="336"/>
        <end position="356"/>
    </location>
</feature>
<feature type="transmembrane region" description="Helical" evidence="3">
    <location>
        <begin position="378"/>
        <end position="398"/>
    </location>
</feature>
<feature type="transmembrane region" description="Helical" evidence="3">
    <location>
        <begin position="412"/>
        <end position="432"/>
    </location>
</feature>
<feature type="transmembrane region" description="Helical" evidence="3">
    <location>
        <begin position="450"/>
        <end position="470"/>
    </location>
</feature>
<feature type="binding site" evidence="2">
    <location>
        <position position="38"/>
    </location>
    <ligand>
        <name>Ca(2+)</name>
        <dbReference type="ChEBI" id="CHEBI:29108"/>
    </ligand>
</feature>
<feature type="binding site" evidence="2">
    <location>
        <position position="43"/>
    </location>
    <ligand>
        <name>Ca(2+)</name>
        <dbReference type="ChEBI" id="CHEBI:29108"/>
    </ligand>
</feature>
<feature type="binding site" description="axial binding residue" evidence="2">
    <location>
        <position position="59"/>
    </location>
    <ligand>
        <name>Fe(II)-heme a</name>
        <dbReference type="ChEBI" id="CHEBI:61715"/>
        <note>low-spin</note>
    </ligand>
    <ligandPart>
        <name>Fe</name>
        <dbReference type="ChEBI" id="CHEBI:18248"/>
    </ligandPart>
</feature>
<feature type="binding site" evidence="2">
    <location>
        <position position="238"/>
    </location>
    <ligand>
        <name>Cu cation</name>
        <dbReference type="ChEBI" id="CHEBI:23378"/>
        <label>B</label>
    </ligand>
</feature>
<feature type="binding site" evidence="1">
    <location>
        <position position="242"/>
    </location>
    <ligand>
        <name>O2</name>
        <dbReference type="ChEBI" id="CHEBI:15379"/>
    </ligand>
</feature>
<feature type="binding site" evidence="2">
    <location>
        <position position="288"/>
    </location>
    <ligand>
        <name>Cu cation</name>
        <dbReference type="ChEBI" id="CHEBI:23378"/>
        <label>B</label>
    </ligand>
</feature>
<feature type="binding site" evidence="2">
    <location>
        <position position="289"/>
    </location>
    <ligand>
        <name>Cu cation</name>
        <dbReference type="ChEBI" id="CHEBI:23378"/>
        <label>B</label>
    </ligand>
</feature>
<feature type="binding site" evidence="2">
    <location>
        <position position="366"/>
    </location>
    <ligand>
        <name>Mg(2+)</name>
        <dbReference type="ChEBI" id="CHEBI:18420"/>
        <note>ligand shared with subunit 2</note>
    </ligand>
</feature>
<feature type="binding site" evidence="2">
    <location>
        <position position="367"/>
    </location>
    <ligand>
        <name>Mg(2+)</name>
        <dbReference type="ChEBI" id="CHEBI:18420"/>
        <note>ligand shared with subunit 2</note>
    </ligand>
</feature>
<feature type="binding site" description="axial binding residue" evidence="2">
    <location>
        <position position="374"/>
    </location>
    <ligand>
        <name>heme a3</name>
        <dbReference type="ChEBI" id="CHEBI:83282"/>
        <note>high-spin</note>
    </ligand>
    <ligandPart>
        <name>Fe</name>
        <dbReference type="ChEBI" id="CHEBI:18248"/>
    </ligandPart>
</feature>
<feature type="binding site" description="axial binding residue" evidence="2">
    <location>
        <position position="376"/>
    </location>
    <ligand>
        <name>Fe(II)-heme a</name>
        <dbReference type="ChEBI" id="CHEBI:61715"/>
        <note>low-spin</note>
    </ligand>
    <ligandPart>
        <name>Fe</name>
        <dbReference type="ChEBI" id="CHEBI:18248"/>
    </ligandPart>
</feature>
<feature type="cross-link" description="1'-histidyl-3'-tyrosine (His-Tyr)" evidence="2">
    <location>
        <begin position="238"/>
        <end position="242"/>
    </location>
</feature>
<feature type="sequence variant" description="In strain: G52 and BG1." evidence="4 5">
    <original>H</original>
    <variation>Q</variation>
    <location>
        <position position="411"/>
    </location>
</feature>
<reference key="1">
    <citation type="journal article" date="1990" name="Proc. Natl. Acad. Sci. U.S.A.">
        <title>Evolution of Drosophila mitochondrial DNA and the history of the melanogaster subgroup.</title>
        <authorList>
            <person name="Satta Y."/>
            <person name="Takahata N."/>
        </authorList>
    </citation>
    <scope>NUCLEOTIDE SEQUENCE [GENOMIC DNA]</scope>
    <scope>VARIANT GLN-411</scope>
    <source>
        <strain>G52</strain>
        <strain>Mauritius island</strain>
    </source>
</reference>
<reference key="2">
    <citation type="journal article" date="2000" name="J. Mol. Evol.">
        <title>Comparative genomics of mitochondrial DNA in members of the Drosophila melanogaster subgroup.</title>
        <authorList>
            <person name="Ballard J.W.O."/>
        </authorList>
    </citation>
    <scope>NUCLEOTIDE SEQUENCE [GENOMIC DNA]</scope>
    <scope>VARIANT GLN-411</scope>
    <source>
        <strain>BG1</strain>
        <strain>G52</strain>
    </source>
</reference>
<reference key="3">
    <citation type="journal article" date="1987" name="Mol. Biol. Evol.">
        <title>Analysis of nucleotide substitutions of mitochondrial DNAs in Drosophila melanogaster and its sibling species.</title>
        <authorList>
            <person name="Satta Y."/>
            <person name="Ishiwa H."/>
            <person name="Chigusa S.I."/>
        </authorList>
    </citation>
    <scope>NUCLEOTIDE SEQUENCE [GENOMIC DNA] OF 1-101</scope>
    <source>
        <strain>Mauritius island</strain>
    </source>
</reference>
<reference key="4">
    <citation type="journal article" date="2009" name="J. Mol. Evol.">
        <title>Comparative genomics of Drosophila mtDNA: Novel features of conservation and change across functional domains and lineages.</title>
        <authorList>
            <person name="Montooth K.L."/>
            <person name="Abt D.N."/>
            <person name="Hofmann J.W."/>
            <person name="Rand D.M."/>
        </authorList>
    </citation>
    <scope>IDENTIFICATION OF PROBABLE INITIATION SITE</scope>
</reference>